<reference key="1">
    <citation type="journal article" date="2003" name="Lancet">
        <title>Sequencing and analysis of the genome of the Whipple's disease bacterium Tropheryma whipplei.</title>
        <authorList>
            <person name="Bentley S.D."/>
            <person name="Maiwald M."/>
            <person name="Murphy L.D."/>
            <person name="Pallen M.J."/>
            <person name="Yeats C.A."/>
            <person name="Dover L.G."/>
            <person name="Norbertczak H.T."/>
            <person name="Besra G.S."/>
            <person name="Quail M.A."/>
            <person name="Harris D.E."/>
            <person name="von Herbay A."/>
            <person name="Goble A."/>
            <person name="Rutter S."/>
            <person name="Squares R."/>
            <person name="Squares S."/>
            <person name="Barrell B.G."/>
            <person name="Parkhill J."/>
            <person name="Relman D.A."/>
        </authorList>
    </citation>
    <scope>NUCLEOTIDE SEQUENCE [LARGE SCALE GENOMIC DNA]</scope>
    <source>
        <strain>TW08/27</strain>
    </source>
</reference>
<name>RS2_TROW8</name>
<dbReference type="EMBL" id="BX251411">
    <property type="protein sequence ID" value="CAD66991.1"/>
    <property type="molecule type" value="Genomic_DNA"/>
</dbReference>
<dbReference type="SMR" id="Q83HZ7"/>
<dbReference type="KEGG" id="tws:TW318"/>
<dbReference type="HOGENOM" id="CLU_040318_2_3_11"/>
<dbReference type="GO" id="GO:0022627">
    <property type="term" value="C:cytosolic small ribosomal subunit"/>
    <property type="evidence" value="ECO:0007669"/>
    <property type="project" value="TreeGrafter"/>
</dbReference>
<dbReference type="GO" id="GO:0003735">
    <property type="term" value="F:structural constituent of ribosome"/>
    <property type="evidence" value="ECO:0007669"/>
    <property type="project" value="InterPro"/>
</dbReference>
<dbReference type="GO" id="GO:0006412">
    <property type="term" value="P:translation"/>
    <property type="evidence" value="ECO:0007669"/>
    <property type="project" value="UniProtKB-UniRule"/>
</dbReference>
<dbReference type="CDD" id="cd01425">
    <property type="entry name" value="RPS2"/>
    <property type="match status" value="1"/>
</dbReference>
<dbReference type="Gene3D" id="3.40.50.10490">
    <property type="entry name" value="Glucose-6-phosphate isomerase like protein, domain 1"/>
    <property type="match status" value="1"/>
</dbReference>
<dbReference type="Gene3D" id="1.10.287.610">
    <property type="entry name" value="Helix hairpin bin"/>
    <property type="match status" value="1"/>
</dbReference>
<dbReference type="HAMAP" id="MF_00291_B">
    <property type="entry name" value="Ribosomal_uS2_B"/>
    <property type="match status" value="1"/>
</dbReference>
<dbReference type="InterPro" id="IPR001865">
    <property type="entry name" value="Ribosomal_uS2"/>
</dbReference>
<dbReference type="InterPro" id="IPR005706">
    <property type="entry name" value="Ribosomal_uS2_bac/mit/plastid"/>
</dbReference>
<dbReference type="InterPro" id="IPR023591">
    <property type="entry name" value="Ribosomal_uS2_flav_dom_sf"/>
</dbReference>
<dbReference type="NCBIfam" id="TIGR01011">
    <property type="entry name" value="rpsB_bact"/>
    <property type="match status" value="1"/>
</dbReference>
<dbReference type="PANTHER" id="PTHR12534">
    <property type="entry name" value="30S RIBOSOMAL PROTEIN S2 PROKARYOTIC AND ORGANELLAR"/>
    <property type="match status" value="1"/>
</dbReference>
<dbReference type="PANTHER" id="PTHR12534:SF0">
    <property type="entry name" value="SMALL RIBOSOMAL SUBUNIT PROTEIN US2M"/>
    <property type="match status" value="1"/>
</dbReference>
<dbReference type="Pfam" id="PF00318">
    <property type="entry name" value="Ribosomal_S2"/>
    <property type="match status" value="1"/>
</dbReference>
<dbReference type="PRINTS" id="PR00395">
    <property type="entry name" value="RIBOSOMALS2"/>
</dbReference>
<dbReference type="SUPFAM" id="SSF52313">
    <property type="entry name" value="Ribosomal protein S2"/>
    <property type="match status" value="1"/>
</dbReference>
<sequence>MFWRGGLPLVTIRNLLDNGVHFGHTTQRWNPKMKGFILTERCGSYILDMRETIRGIVTAVDFIRDTVARGGEVLFIGTKRQAQQVIFKQASRVGQHYIAHRWLGGLLTNFSTVSKSLVRMKELEEARLDDSVSTKKEQLIRGRELQKLRRSLGGIRNMTKLPALLWVVDTNREGIAVEEARKLGIPVVAILDSNCDPDLVQFPIPGNDDSIRSIELLTGIVADAVAQGLVERHKAPQDDIEPMAEWEKQLLQSGDSSGETRPISGTDRPLDGDLSKGPAPQDEELSD</sequence>
<protein>
    <recommendedName>
        <fullName evidence="1">Small ribosomal subunit protein uS2</fullName>
    </recommendedName>
    <alternativeName>
        <fullName evidence="3">30S ribosomal protein S2</fullName>
    </alternativeName>
</protein>
<comment type="similarity">
    <text evidence="1">Belongs to the universal ribosomal protein uS2 family.</text>
</comment>
<feature type="chain" id="PRO_0000134268" description="Small ribosomal subunit protein uS2">
    <location>
        <begin position="1"/>
        <end position="287"/>
    </location>
</feature>
<feature type="region of interest" description="Disordered" evidence="2">
    <location>
        <begin position="233"/>
        <end position="287"/>
    </location>
</feature>
<feature type="compositionally biased region" description="Polar residues" evidence="2">
    <location>
        <begin position="250"/>
        <end position="259"/>
    </location>
</feature>
<accession>Q83HZ7</accession>
<keyword id="KW-0687">Ribonucleoprotein</keyword>
<keyword id="KW-0689">Ribosomal protein</keyword>
<proteinExistence type="inferred from homology"/>
<gene>
    <name evidence="1" type="primary">rpsB</name>
    <name type="ordered locus">TW318</name>
</gene>
<evidence type="ECO:0000255" key="1">
    <source>
        <dbReference type="HAMAP-Rule" id="MF_00291"/>
    </source>
</evidence>
<evidence type="ECO:0000256" key="2">
    <source>
        <dbReference type="SAM" id="MobiDB-lite"/>
    </source>
</evidence>
<evidence type="ECO:0000305" key="3"/>
<organism>
    <name type="scientific">Tropheryma whipplei (strain TW08/27)</name>
    <name type="common">Whipple's bacillus</name>
    <dbReference type="NCBI Taxonomy" id="218496"/>
    <lineage>
        <taxon>Bacteria</taxon>
        <taxon>Bacillati</taxon>
        <taxon>Actinomycetota</taxon>
        <taxon>Actinomycetes</taxon>
        <taxon>Micrococcales</taxon>
        <taxon>Tropherymataceae</taxon>
        <taxon>Tropheryma</taxon>
    </lineage>
</organism>